<proteinExistence type="inferred from homology"/>
<comment type="function">
    <text evidence="1">Probably deamidates glutamine residues to glutamate on methyl-accepting chemotaxis receptors (MCPs), playing an important role in chemotaxis.</text>
</comment>
<comment type="catalytic activity">
    <reaction evidence="1">
        <text>L-glutaminyl-[protein] + H2O = L-glutamyl-[protein] + NH4(+)</text>
        <dbReference type="Rhea" id="RHEA:16441"/>
        <dbReference type="Rhea" id="RHEA-COMP:10207"/>
        <dbReference type="Rhea" id="RHEA-COMP:10208"/>
        <dbReference type="ChEBI" id="CHEBI:15377"/>
        <dbReference type="ChEBI" id="CHEBI:28938"/>
        <dbReference type="ChEBI" id="CHEBI:29973"/>
        <dbReference type="ChEBI" id="CHEBI:30011"/>
        <dbReference type="EC" id="3.5.1.44"/>
    </reaction>
</comment>
<comment type="similarity">
    <text evidence="1">Belongs to the CheD family.</text>
</comment>
<sequence>MDKVEVSELHVRIGQVKIGSPGQVLTAILGSCVGIGFFFPQRQIYGLAHCLLSQSSSQPVASSAAQTGRTREDGQLVGNGRHVDKAIESLLKMMDIQDEERRQLRVVLAGGANMSMPFDTPPSQLVGSVNAKFARQAIRSAGLRLLGDDLGGLNGRRISINCDSGEYDIQQIPRLGGTV</sequence>
<organism>
    <name type="scientific">Ruegeria sp. (strain TM1040)</name>
    <name type="common">Silicibacter sp.</name>
    <dbReference type="NCBI Taxonomy" id="292414"/>
    <lineage>
        <taxon>Bacteria</taxon>
        <taxon>Pseudomonadati</taxon>
        <taxon>Pseudomonadota</taxon>
        <taxon>Alphaproteobacteria</taxon>
        <taxon>Rhodobacterales</taxon>
        <taxon>Roseobacteraceae</taxon>
        <taxon>Ruegeria</taxon>
    </lineage>
</organism>
<keyword id="KW-0145">Chemotaxis</keyword>
<keyword id="KW-0378">Hydrolase</keyword>
<keyword id="KW-0614">Plasmid</keyword>
<keyword id="KW-1185">Reference proteome</keyword>
<evidence type="ECO:0000255" key="1">
    <source>
        <dbReference type="HAMAP-Rule" id="MF_01440"/>
    </source>
</evidence>
<feature type="chain" id="PRO_0000251067" description="Probable chemoreceptor glutamine deamidase CheD 2">
    <location>
        <begin position="1"/>
        <end position="179"/>
    </location>
</feature>
<protein>
    <recommendedName>
        <fullName evidence="1">Probable chemoreceptor glutamine deamidase CheD 2</fullName>
        <ecNumber evidence="1">3.5.1.44</ecNumber>
    </recommendedName>
</protein>
<gene>
    <name evidence="1" type="primary">cheD2</name>
    <name type="ordered locus">TM1040_3244</name>
</gene>
<reference key="1">
    <citation type="submission" date="2006-05" db="EMBL/GenBank/DDBJ databases">
        <title>Complete sequence of megaplasmid of Silicibacter sp. TM1040.</title>
        <authorList>
            <consortium name="US DOE Joint Genome Institute"/>
            <person name="Copeland A."/>
            <person name="Lucas S."/>
            <person name="Lapidus A."/>
            <person name="Barry K."/>
            <person name="Detter J.C."/>
            <person name="Glavina del Rio T."/>
            <person name="Hammon N."/>
            <person name="Israni S."/>
            <person name="Dalin E."/>
            <person name="Tice H."/>
            <person name="Pitluck S."/>
            <person name="Brettin T."/>
            <person name="Bruce D."/>
            <person name="Han C."/>
            <person name="Tapia R."/>
            <person name="Goodwin L."/>
            <person name="Thompson L.S."/>
            <person name="Gilna P."/>
            <person name="Schmutz J."/>
            <person name="Larimer F."/>
            <person name="Land M."/>
            <person name="Hauser L."/>
            <person name="Kyrpides N."/>
            <person name="Kim E."/>
            <person name="Belas R."/>
            <person name="Moran M.A."/>
            <person name="Buchan A."/>
            <person name="Gonzalez J.M."/>
            <person name="Schell M.A."/>
            <person name="Sun F."/>
            <person name="Richardson P."/>
        </authorList>
    </citation>
    <scope>NUCLEOTIDE SEQUENCE [LARGE SCALE GENOMIC DNA]</scope>
    <source>
        <strain>TM1040</strain>
    </source>
</reference>
<accession>Q1GM98</accession>
<name>CHED2_RUEST</name>
<dbReference type="EC" id="3.5.1.44" evidence="1"/>
<dbReference type="EMBL" id="CP000376">
    <property type="protein sequence ID" value="ABF62218.1"/>
    <property type="molecule type" value="Genomic_DNA"/>
</dbReference>
<dbReference type="RefSeq" id="WP_011536862.1">
    <property type="nucleotide sequence ID" value="NC_008043.1"/>
</dbReference>
<dbReference type="SMR" id="Q1GM98"/>
<dbReference type="KEGG" id="sit:TM1040_3244"/>
<dbReference type="HOGENOM" id="CLU_087854_2_0_5"/>
<dbReference type="OrthoDB" id="7838801at2"/>
<dbReference type="Proteomes" id="UP000000636">
    <property type="component" value="Plasmid megaplasmid TM1040"/>
</dbReference>
<dbReference type="GO" id="GO:0050568">
    <property type="term" value="F:protein-glutamine glutaminase activity"/>
    <property type="evidence" value="ECO:0007669"/>
    <property type="project" value="UniProtKB-UniRule"/>
</dbReference>
<dbReference type="GO" id="GO:0006935">
    <property type="term" value="P:chemotaxis"/>
    <property type="evidence" value="ECO:0007669"/>
    <property type="project" value="UniProtKB-UniRule"/>
</dbReference>
<dbReference type="CDD" id="cd16352">
    <property type="entry name" value="CheD"/>
    <property type="match status" value="1"/>
</dbReference>
<dbReference type="Gene3D" id="3.30.1330.200">
    <property type="match status" value="1"/>
</dbReference>
<dbReference type="HAMAP" id="MF_01440">
    <property type="entry name" value="CheD"/>
    <property type="match status" value="1"/>
</dbReference>
<dbReference type="InterPro" id="IPR038592">
    <property type="entry name" value="CheD-like_sf"/>
</dbReference>
<dbReference type="InterPro" id="IPR005659">
    <property type="entry name" value="Chemorcpt_Glu_NH3ase_CheD"/>
</dbReference>
<dbReference type="InterPro" id="IPR011324">
    <property type="entry name" value="Cytotoxic_necrot_fac-like_cat"/>
</dbReference>
<dbReference type="PANTHER" id="PTHR35147">
    <property type="entry name" value="CHEMORECEPTOR GLUTAMINE DEAMIDASE CHED-RELATED"/>
    <property type="match status" value="1"/>
</dbReference>
<dbReference type="PANTHER" id="PTHR35147:SF1">
    <property type="entry name" value="CHEMORECEPTOR GLUTAMINE DEAMIDASE CHED-RELATED"/>
    <property type="match status" value="1"/>
</dbReference>
<dbReference type="Pfam" id="PF03975">
    <property type="entry name" value="CheD"/>
    <property type="match status" value="1"/>
</dbReference>
<dbReference type="SUPFAM" id="SSF64438">
    <property type="entry name" value="CNF1/YfiH-like putative cysteine hydrolases"/>
    <property type="match status" value="1"/>
</dbReference>
<geneLocation type="plasmid">
    <name>megaplasmid TM1040</name>
</geneLocation>